<geneLocation type="chloroplast"/>
<reference key="1">
    <citation type="submission" date="2007-03" db="EMBL/GenBank/DDBJ databases">
        <title>Sequencing analysis of Lepidium virginicum JO26 chloroplast DNA.</title>
        <authorList>
            <person name="Hosouchi T."/>
            <person name="Tsuruoka H."/>
            <person name="Kotani H."/>
        </authorList>
    </citation>
    <scope>NUCLEOTIDE SEQUENCE [LARGE SCALE GENOMIC DNA]</scope>
</reference>
<comment type="subcellular location">
    <subcellularLocation>
        <location>Plastid</location>
        <location>Chloroplast</location>
    </subcellularLocation>
</comment>
<comment type="similarity">
    <text evidence="1">Belongs to the bacterial ribosomal protein bL32 family.</text>
</comment>
<proteinExistence type="inferred from homology"/>
<protein>
    <recommendedName>
        <fullName evidence="1">Large ribosomal subunit protein bL32c</fullName>
    </recommendedName>
    <alternativeName>
        <fullName evidence="2">50S ribosomal protein L32, chloroplastic</fullName>
    </alternativeName>
</protein>
<gene>
    <name evidence="1" type="primary">rpl32</name>
</gene>
<feature type="chain" id="PRO_0000296615" description="Large ribosomal subunit protein bL32c">
    <location>
        <begin position="1"/>
        <end position="52"/>
    </location>
</feature>
<keyword id="KW-0150">Chloroplast</keyword>
<keyword id="KW-0934">Plastid</keyword>
<keyword id="KW-0687">Ribonucleoprotein</keyword>
<keyword id="KW-0689">Ribosomal protein</keyword>
<evidence type="ECO:0000255" key="1">
    <source>
        <dbReference type="HAMAP-Rule" id="MF_00340"/>
    </source>
</evidence>
<evidence type="ECO:0000305" key="2"/>
<organism>
    <name type="scientific">Lepidium virginicum</name>
    <name type="common">Virginia pepperweed</name>
    <dbReference type="NCBI Taxonomy" id="59292"/>
    <lineage>
        <taxon>Eukaryota</taxon>
        <taxon>Viridiplantae</taxon>
        <taxon>Streptophyta</taxon>
        <taxon>Embryophyta</taxon>
        <taxon>Tracheophyta</taxon>
        <taxon>Spermatophyta</taxon>
        <taxon>Magnoliopsida</taxon>
        <taxon>eudicotyledons</taxon>
        <taxon>Gunneridae</taxon>
        <taxon>Pentapetalae</taxon>
        <taxon>rosids</taxon>
        <taxon>malvids</taxon>
        <taxon>Brassicales</taxon>
        <taxon>Brassicaceae</taxon>
        <taxon>Lepidieae</taxon>
        <taxon>Lepidium</taxon>
    </lineage>
</organism>
<sequence>MAVPKKRTSISKKRIRKKIWKRKGYWTSLKAFSLGKSLSTGNSKSFFVQQNK</sequence>
<name>RK32_LEPVR</name>
<dbReference type="EMBL" id="AP009374">
    <property type="protein sequence ID" value="BAF50512.1"/>
    <property type="molecule type" value="Genomic_DNA"/>
</dbReference>
<dbReference type="RefSeq" id="YP_001123687.1">
    <property type="nucleotide sequence ID" value="NC_009273.1"/>
</dbReference>
<dbReference type="SMR" id="A4QLF7"/>
<dbReference type="GeneID" id="4962028"/>
<dbReference type="GO" id="GO:0009507">
    <property type="term" value="C:chloroplast"/>
    <property type="evidence" value="ECO:0007669"/>
    <property type="project" value="UniProtKB-SubCell"/>
</dbReference>
<dbReference type="GO" id="GO:0015934">
    <property type="term" value="C:large ribosomal subunit"/>
    <property type="evidence" value="ECO:0007669"/>
    <property type="project" value="InterPro"/>
</dbReference>
<dbReference type="GO" id="GO:0003735">
    <property type="term" value="F:structural constituent of ribosome"/>
    <property type="evidence" value="ECO:0007669"/>
    <property type="project" value="InterPro"/>
</dbReference>
<dbReference type="GO" id="GO:0006412">
    <property type="term" value="P:translation"/>
    <property type="evidence" value="ECO:0007669"/>
    <property type="project" value="UniProtKB-UniRule"/>
</dbReference>
<dbReference type="HAMAP" id="MF_00340">
    <property type="entry name" value="Ribosomal_bL32"/>
    <property type="match status" value="1"/>
</dbReference>
<dbReference type="InterPro" id="IPR002677">
    <property type="entry name" value="Ribosomal_bL32"/>
</dbReference>
<dbReference type="InterPro" id="IPR044958">
    <property type="entry name" value="Ribosomal_bL32_plant/cyanobact"/>
</dbReference>
<dbReference type="InterPro" id="IPR011332">
    <property type="entry name" value="Ribosomal_zn-bd"/>
</dbReference>
<dbReference type="PANTHER" id="PTHR36083">
    <property type="entry name" value="50S RIBOSOMAL PROTEIN L32, CHLOROPLASTIC"/>
    <property type="match status" value="1"/>
</dbReference>
<dbReference type="PANTHER" id="PTHR36083:SF1">
    <property type="entry name" value="LARGE RIBOSOMAL SUBUNIT PROTEIN BL32C"/>
    <property type="match status" value="1"/>
</dbReference>
<dbReference type="Pfam" id="PF01783">
    <property type="entry name" value="Ribosomal_L32p"/>
    <property type="match status" value="1"/>
</dbReference>
<dbReference type="SUPFAM" id="SSF57829">
    <property type="entry name" value="Zn-binding ribosomal proteins"/>
    <property type="match status" value="1"/>
</dbReference>
<accession>A4QLF7</accession>